<name>ILVD_METM7</name>
<comment type="function">
    <text evidence="1">Functions in the biosynthesis of branched-chain amino acids. Catalyzes the dehydration of (2R,3R)-2,3-dihydroxy-3-methylpentanoate (2,3-dihydroxy-3-methylvalerate) into 2-oxo-3-methylpentanoate (2-oxo-3-methylvalerate) and of (2R)-2,3-dihydroxy-3-methylbutanoate (2,3-dihydroxyisovalerate) into 2-oxo-3-methylbutanoate (2-oxoisovalerate), the penultimate precursor to L-isoleucine and L-valine, respectively.</text>
</comment>
<comment type="catalytic activity">
    <reaction evidence="1">
        <text>(2R)-2,3-dihydroxy-3-methylbutanoate = 3-methyl-2-oxobutanoate + H2O</text>
        <dbReference type="Rhea" id="RHEA:24809"/>
        <dbReference type="ChEBI" id="CHEBI:11851"/>
        <dbReference type="ChEBI" id="CHEBI:15377"/>
        <dbReference type="ChEBI" id="CHEBI:49072"/>
        <dbReference type="EC" id="4.2.1.9"/>
    </reaction>
    <physiologicalReaction direction="left-to-right" evidence="1">
        <dbReference type="Rhea" id="RHEA:24810"/>
    </physiologicalReaction>
</comment>
<comment type="catalytic activity">
    <reaction evidence="1">
        <text>(2R,3R)-2,3-dihydroxy-3-methylpentanoate = (S)-3-methyl-2-oxopentanoate + H2O</text>
        <dbReference type="Rhea" id="RHEA:27694"/>
        <dbReference type="ChEBI" id="CHEBI:15377"/>
        <dbReference type="ChEBI" id="CHEBI:35146"/>
        <dbReference type="ChEBI" id="CHEBI:49258"/>
        <dbReference type="EC" id="4.2.1.9"/>
    </reaction>
    <physiologicalReaction direction="left-to-right" evidence="1">
        <dbReference type="Rhea" id="RHEA:27695"/>
    </physiologicalReaction>
</comment>
<comment type="cofactor">
    <cofactor evidence="1">
        <name>[2Fe-2S] cluster</name>
        <dbReference type="ChEBI" id="CHEBI:190135"/>
    </cofactor>
    <text evidence="1">Binds 1 [2Fe-2S] cluster per subunit. This cluster acts as a Lewis acid cofactor.</text>
</comment>
<comment type="cofactor">
    <cofactor evidence="1">
        <name>Mg(2+)</name>
        <dbReference type="ChEBI" id="CHEBI:18420"/>
    </cofactor>
</comment>
<comment type="pathway">
    <text evidence="1">Amino-acid biosynthesis; L-isoleucine biosynthesis; L-isoleucine from 2-oxobutanoate: step 3/4.</text>
</comment>
<comment type="pathway">
    <text evidence="1">Amino-acid biosynthesis; L-valine biosynthesis; L-valine from pyruvate: step 3/4.</text>
</comment>
<comment type="subunit">
    <text evidence="1">Homodimer.</text>
</comment>
<comment type="similarity">
    <text evidence="1">Belongs to the IlvD/Edd family.</text>
</comment>
<protein>
    <recommendedName>
        <fullName evidence="1">Dihydroxy-acid dehydratase</fullName>
        <shortName evidence="1">DAD</shortName>
        <ecNumber evidence="1">4.2.1.9</ecNumber>
    </recommendedName>
</protein>
<feature type="chain" id="PRO_1000001007" description="Dihydroxy-acid dehydratase">
    <location>
        <begin position="1"/>
        <end position="550"/>
    </location>
</feature>
<feature type="active site" description="Proton acceptor" evidence="1">
    <location>
        <position position="466"/>
    </location>
</feature>
<feature type="binding site" evidence="1">
    <location>
        <position position="78"/>
    </location>
    <ligand>
        <name>Mg(2+)</name>
        <dbReference type="ChEBI" id="CHEBI:18420"/>
    </ligand>
</feature>
<feature type="binding site" evidence="1">
    <location>
        <position position="119"/>
    </location>
    <ligand>
        <name>[2Fe-2S] cluster</name>
        <dbReference type="ChEBI" id="CHEBI:190135"/>
    </ligand>
</feature>
<feature type="binding site" evidence="1">
    <location>
        <position position="120"/>
    </location>
    <ligand>
        <name>Mg(2+)</name>
        <dbReference type="ChEBI" id="CHEBI:18420"/>
    </ligand>
</feature>
<feature type="binding site" description="via carbamate group" evidence="1">
    <location>
        <position position="121"/>
    </location>
    <ligand>
        <name>Mg(2+)</name>
        <dbReference type="ChEBI" id="CHEBI:18420"/>
    </ligand>
</feature>
<feature type="binding site" evidence="1">
    <location>
        <position position="191"/>
    </location>
    <ligand>
        <name>[2Fe-2S] cluster</name>
        <dbReference type="ChEBI" id="CHEBI:190135"/>
    </ligand>
</feature>
<feature type="binding site" evidence="1">
    <location>
        <position position="440"/>
    </location>
    <ligand>
        <name>Mg(2+)</name>
        <dbReference type="ChEBI" id="CHEBI:18420"/>
    </ligand>
</feature>
<feature type="modified residue" description="N6-carboxylysine" evidence="1">
    <location>
        <position position="121"/>
    </location>
</feature>
<dbReference type="EC" id="4.2.1.9" evidence="1"/>
<dbReference type="EMBL" id="CP000745">
    <property type="protein sequence ID" value="ABR66383.1"/>
    <property type="molecule type" value="Genomic_DNA"/>
</dbReference>
<dbReference type="SMR" id="A6VIV7"/>
<dbReference type="STRING" id="426368.MmarC7_1320"/>
<dbReference type="KEGG" id="mmz:MmarC7_1320"/>
<dbReference type="eggNOG" id="arCOG04045">
    <property type="taxonomic scope" value="Archaea"/>
</dbReference>
<dbReference type="HOGENOM" id="CLU_014271_4_2_2"/>
<dbReference type="OrthoDB" id="8674at2157"/>
<dbReference type="UniPathway" id="UPA00047">
    <property type="reaction ID" value="UER00057"/>
</dbReference>
<dbReference type="UniPathway" id="UPA00049">
    <property type="reaction ID" value="UER00061"/>
</dbReference>
<dbReference type="GO" id="GO:0005829">
    <property type="term" value="C:cytosol"/>
    <property type="evidence" value="ECO:0007669"/>
    <property type="project" value="TreeGrafter"/>
</dbReference>
<dbReference type="GO" id="GO:0051537">
    <property type="term" value="F:2 iron, 2 sulfur cluster binding"/>
    <property type="evidence" value="ECO:0007669"/>
    <property type="project" value="UniProtKB-UniRule"/>
</dbReference>
<dbReference type="GO" id="GO:0004160">
    <property type="term" value="F:dihydroxy-acid dehydratase activity"/>
    <property type="evidence" value="ECO:0007669"/>
    <property type="project" value="UniProtKB-UniRule"/>
</dbReference>
<dbReference type="GO" id="GO:0000287">
    <property type="term" value="F:magnesium ion binding"/>
    <property type="evidence" value="ECO:0007669"/>
    <property type="project" value="UniProtKB-UniRule"/>
</dbReference>
<dbReference type="GO" id="GO:0009097">
    <property type="term" value="P:isoleucine biosynthetic process"/>
    <property type="evidence" value="ECO:0007669"/>
    <property type="project" value="UniProtKB-UniRule"/>
</dbReference>
<dbReference type="GO" id="GO:0009099">
    <property type="term" value="P:L-valine biosynthetic process"/>
    <property type="evidence" value="ECO:0007669"/>
    <property type="project" value="UniProtKB-UniRule"/>
</dbReference>
<dbReference type="FunFam" id="3.50.30.80:FF:000001">
    <property type="entry name" value="Dihydroxy-acid dehydratase"/>
    <property type="match status" value="1"/>
</dbReference>
<dbReference type="Gene3D" id="3.50.30.80">
    <property type="entry name" value="IlvD/EDD C-terminal domain-like"/>
    <property type="match status" value="1"/>
</dbReference>
<dbReference type="HAMAP" id="MF_00012">
    <property type="entry name" value="IlvD"/>
    <property type="match status" value="1"/>
</dbReference>
<dbReference type="InterPro" id="IPR042096">
    <property type="entry name" value="Dihydro-acid_dehy_C"/>
</dbReference>
<dbReference type="InterPro" id="IPR004404">
    <property type="entry name" value="DihydroxyA_deHydtase"/>
</dbReference>
<dbReference type="InterPro" id="IPR020558">
    <property type="entry name" value="DiOHA_6PGluconate_deHydtase_CS"/>
</dbReference>
<dbReference type="InterPro" id="IPR056740">
    <property type="entry name" value="ILV_EDD_C"/>
</dbReference>
<dbReference type="InterPro" id="IPR000581">
    <property type="entry name" value="ILV_EDD_N"/>
</dbReference>
<dbReference type="InterPro" id="IPR037237">
    <property type="entry name" value="IlvD/EDD_N"/>
</dbReference>
<dbReference type="NCBIfam" id="TIGR00110">
    <property type="entry name" value="ilvD"/>
    <property type="match status" value="1"/>
</dbReference>
<dbReference type="NCBIfam" id="NF002068">
    <property type="entry name" value="PRK00911.1"/>
    <property type="match status" value="1"/>
</dbReference>
<dbReference type="PANTHER" id="PTHR43661">
    <property type="entry name" value="D-XYLONATE DEHYDRATASE"/>
    <property type="match status" value="1"/>
</dbReference>
<dbReference type="PANTHER" id="PTHR43661:SF3">
    <property type="entry name" value="D-XYLONATE DEHYDRATASE YAGF-RELATED"/>
    <property type="match status" value="1"/>
</dbReference>
<dbReference type="Pfam" id="PF24877">
    <property type="entry name" value="ILV_EDD_C"/>
    <property type="match status" value="1"/>
</dbReference>
<dbReference type="Pfam" id="PF00920">
    <property type="entry name" value="ILVD_EDD_N"/>
    <property type="match status" value="1"/>
</dbReference>
<dbReference type="SUPFAM" id="SSF143975">
    <property type="entry name" value="IlvD/EDD N-terminal domain-like"/>
    <property type="match status" value="1"/>
</dbReference>
<dbReference type="SUPFAM" id="SSF52016">
    <property type="entry name" value="LeuD/IlvD-like"/>
    <property type="match status" value="1"/>
</dbReference>
<dbReference type="PROSITE" id="PS00886">
    <property type="entry name" value="ILVD_EDD_1"/>
    <property type="match status" value="1"/>
</dbReference>
<dbReference type="PROSITE" id="PS00887">
    <property type="entry name" value="ILVD_EDD_2"/>
    <property type="match status" value="1"/>
</dbReference>
<proteinExistence type="inferred from homology"/>
<accession>A6VIV7</accession>
<reference key="1">
    <citation type="submission" date="2007-06" db="EMBL/GenBank/DDBJ databases">
        <title>Complete sequence of Methanococcus maripaludis C7.</title>
        <authorList>
            <consortium name="US DOE Joint Genome Institute"/>
            <person name="Copeland A."/>
            <person name="Lucas S."/>
            <person name="Lapidus A."/>
            <person name="Barry K."/>
            <person name="Glavina del Rio T."/>
            <person name="Dalin E."/>
            <person name="Tice H."/>
            <person name="Pitluck S."/>
            <person name="Clum A."/>
            <person name="Schmutz J."/>
            <person name="Larimer F."/>
            <person name="Land M."/>
            <person name="Hauser L."/>
            <person name="Kyrpides N."/>
            <person name="Anderson I."/>
            <person name="Sieprawska-Lupa M."/>
            <person name="Whitman W.B."/>
            <person name="Richardson P."/>
        </authorList>
    </citation>
    <scope>NUCLEOTIDE SEQUENCE [LARGE SCALE GENOMIC DNA]</scope>
    <source>
        <strain>C7 / ATCC BAA-1331</strain>
    </source>
</reference>
<gene>
    <name evidence="1" type="primary">ilvD</name>
    <name type="ordered locus">MmarC7_1320</name>
</gene>
<sequence>MISDNVKKGVIRSPNRALLKACGYSDEDMEKPFIGVVNSFTEVVPGHIHLKTLSEAVKHGVYANGGTPFEFNTIGICDGIAMGHEGMKYSLPSREIIADAVESMARAHGFDGLVLIPTCDKIVPGMIMGALRLNIPFIVVTGGPMLPGEFQGKKCELISLFEGVGEYQVGKITEEELKSIEECACPGAGSCAGLYTANSMACLTEALGLSLPMCATIHAVDAQKVRIAKKTGSKIVDLVKEDVKPTDILTKEAFENAILVDLALGGSTNTTLHIPAIANEIENKFITLDDFDRLSNEVPHIASIKPGGEHYMIDLHNAGGIPAVLNVLKGKIRDTKTVDGRSTLEIAESVKYINYDVIRKVEAPVHETAGLRVLKGNLAPNGCVVKIGAVNPKMYKHDGPAKVYNSEDEAISAILGGKIVEGDVIVIRYEGPSGGPGMREMLSPTSAICGMGLDDSVALITDGRFSGGSRGPCIGHVSPEAAAGGVIAAIENGDIIKIDMIGKEINVDLDESVIKERLSKLDEFEPKIKKGYLSRYSRLVSSADEGAVLK</sequence>
<keyword id="KW-0001">2Fe-2S</keyword>
<keyword id="KW-0028">Amino-acid biosynthesis</keyword>
<keyword id="KW-0100">Branched-chain amino acid biosynthesis</keyword>
<keyword id="KW-0408">Iron</keyword>
<keyword id="KW-0411">Iron-sulfur</keyword>
<keyword id="KW-0456">Lyase</keyword>
<keyword id="KW-0460">Magnesium</keyword>
<keyword id="KW-0479">Metal-binding</keyword>
<evidence type="ECO:0000255" key="1">
    <source>
        <dbReference type="HAMAP-Rule" id="MF_00012"/>
    </source>
</evidence>
<organism>
    <name type="scientific">Methanococcus maripaludis (strain C7 / ATCC BAA-1331)</name>
    <dbReference type="NCBI Taxonomy" id="426368"/>
    <lineage>
        <taxon>Archaea</taxon>
        <taxon>Methanobacteriati</taxon>
        <taxon>Methanobacteriota</taxon>
        <taxon>Methanomada group</taxon>
        <taxon>Methanococci</taxon>
        <taxon>Methanococcales</taxon>
        <taxon>Methanococcaceae</taxon>
        <taxon>Methanococcus</taxon>
    </lineage>
</organism>